<dbReference type="EMBL" id="AK052345">
    <property type="protein sequence ID" value="BAC34947.1"/>
    <property type="molecule type" value="mRNA"/>
</dbReference>
<dbReference type="EMBL" id="BC053749">
    <property type="protein sequence ID" value="AAH53749.1"/>
    <property type="molecule type" value="mRNA"/>
</dbReference>
<dbReference type="CCDS" id="CCDS21096.1">
    <molecule id="Q7TSA6-1"/>
</dbReference>
<dbReference type="RefSeq" id="NP_899144.1">
    <molecule id="Q7TSA6-1"/>
    <property type="nucleotide sequence ID" value="NM_183321.1"/>
</dbReference>
<dbReference type="FunCoup" id="Q7TSA6">
    <property type="interactions" value="13"/>
</dbReference>
<dbReference type="STRING" id="10090.ENSMUSP00000103800"/>
<dbReference type="GlyGen" id="Q7TSA6">
    <property type="glycosylation" value="4 sites"/>
</dbReference>
<dbReference type="iPTMnet" id="Q7TSA6"/>
<dbReference type="PhosphoSitePlus" id="Q7TSA6"/>
<dbReference type="PaxDb" id="10090-ENSMUSP00000103800"/>
<dbReference type="PeptideAtlas" id="Q7TSA6"/>
<dbReference type="ProteomicsDB" id="291756">
    <molecule id="Q7TSA6-1"/>
</dbReference>
<dbReference type="ProteomicsDB" id="291757">
    <molecule id="Q7TSA6-2"/>
</dbReference>
<dbReference type="Pumba" id="Q7TSA6"/>
<dbReference type="Antibodypedia" id="44565">
    <property type="antibodies" value="35 antibodies from 12 providers"/>
</dbReference>
<dbReference type="DNASU" id="333193"/>
<dbReference type="Ensembl" id="ENSMUST00000062708.7">
    <molecule id="Q7TSA6-1"/>
    <property type="protein sequence ID" value="ENSMUSP00000059135.7"/>
    <property type="gene ID" value="ENSMUSG00000036864.17"/>
</dbReference>
<dbReference type="Ensembl" id="ENSMUST00000108165.8">
    <molecule id="Q7TSA6-1"/>
    <property type="protein sequence ID" value="ENSMUSP00000103800.2"/>
    <property type="gene ID" value="ENSMUSG00000036864.17"/>
</dbReference>
<dbReference type="GeneID" id="333193"/>
<dbReference type="KEGG" id="mmu:333193"/>
<dbReference type="UCSC" id="uc009get.1">
    <molecule id="Q7TSA6-1"/>
    <property type="organism name" value="mouse"/>
</dbReference>
<dbReference type="UCSC" id="uc009geu.1">
    <molecule id="Q7TSA6-2"/>
    <property type="organism name" value="mouse"/>
</dbReference>
<dbReference type="AGR" id="MGI:2681861"/>
<dbReference type="CTD" id="148137"/>
<dbReference type="MGI" id="MGI:2681861">
    <property type="gene designation" value="Proser3"/>
</dbReference>
<dbReference type="VEuPathDB" id="HostDB:ENSMUSG00000036864"/>
<dbReference type="eggNOG" id="ENOG502S6GS">
    <property type="taxonomic scope" value="Eukaryota"/>
</dbReference>
<dbReference type="GeneTree" id="ENSGT00390000001986"/>
<dbReference type="HOGENOM" id="CLU_022718_0_0_1"/>
<dbReference type="InParanoid" id="Q7TSA6"/>
<dbReference type="PhylomeDB" id="Q7TSA6"/>
<dbReference type="TreeFam" id="TF337513"/>
<dbReference type="BioGRID-ORCS" id="333193">
    <property type="hits" value="6 hits in 77 CRISPR screens"/>
</dbReference>
<dbReference type="ChiTaRS" id="Proser3">
    <property type="organism name" value="mouse"/>
</dbReference>
<dbReference type="PRO" id="PR:Q7TSA6"/>
<dbReference type="Proteomes" id="UP000000589">
    <property type="component" value="Chromosome 7"/>
</dbReference>
<dbReference type="RNAct" id="Q7TSA6">
    <property type="molecule type" value="protein"/>
</dbReference>
<dbReference type="Bgee" id="ENSMUSG00000036864">
    <property type="expression patterns" value="Expressed in undifferentiated genital tubercle and 65 other cell types or tissues"/>
</dbReference>
<dbReference type="ExpressionAtlas" id="Q7TSA6">
    <property type="expression patterns" value="baseline and differential"/>
</dbReference>
<dbReference type="GO" id="GO:0005813">
    <property type="term" value="C:centrosome"/>
    <property type="evidence" value="ECO:0000250"/>
    <property type="project" value="UniProtKB"/>
</dbReference>
<dbReference type="GO" id="GO:0005737">
    <property type="term" value="C:cytoplasm"/>
    <property type="evidence" value="ECO:0007669"/>
    <property type="project" value="UniProtKB-KW"/>
</dbReference>
<dbReference type="InterPro" id="IPR037646">
    <property type="entry name" value="PROSER3"/>
</dbReference>
<dbReference type="PANTHER" id="PTHR22045">
    <property type="entry name" value="PROLINE AND SERINE-RICH PROTEIN 3"/>
    <property type="match status" value="1"/>
</dbReference>
<dbReference type="PANTHER" id="PTHR22045:SF6">
    <property type="entry name" value="PROLINE AND SERINE-RICH PROTEIN 3"/>
    <property type="match status" value="1"/>
</dbReference>
<evidence type="ECO:0000250" key="1">
    <source>
        <dbReference type="UniProtKB" id="Q2NL68"/>
    </source>
</evidence>
<evidence type="ECO:0000256" key="2">
    <source>
        <dbReference type="SAM" id="MobiDB-lite"/>
    </source>
</evidence>
<evidence type="ECO:0000303" key="3">
    <source>
    </source>
</evidence>
<evidence type="ECO:0007744" key="4">
    <source>
    </source>
</evidence>
<keyword id="KW-0025">Alternative splicing</keyword>
<keyword id="KW-0963">Cytoplasm</keyword>
<keyword id="KW-0206">Cytoskeleton</keyword>
<keyword id="KW-0597">Phosphoprotein</keyword>
<keyword id="KW-1185">Reference proteome</keyword>
<protein>
    <recommendedName>
        <fullName>Proline and serine-rich protein 3</fullName>
    </recommendedName>
</protein>
<feature type="chain" id="PRO_0000299483" description="Proline and serine-rich protein 3">
    <location>
        <begin position="1"/>
        <end position="634"/>
    </location>
</feature>
<feature type="region of interest" description="Disordered" evidence="2">
    <location>
        <begin position="1"/>
        <end position="69"/>
    </location>
</feature>
<feature type="region of interest" description="Disordered" evidence="2">
    <location>
        <begin position="81"/>
        <end position="142"/>
    </location>
</feature>
<feature type="region of interest" description="Disordered" evidence="2">
    <location>
        <begin position="185"/>
        <end position="242"/>
    </location>
</feature>
<feature type="region of interest" description="Disordered" evidence="2">
    <location>
        <begin position="368"/>
        <end position="455"/>
    </location>
</feature>
<feature type="region of interest" description="Disordered" evidence="2">
    <location>
        <begin position="472"/>
        <end position="534"/>
    </location>
</feature>
<feature type="compositionally biased region" description="Polar residues" evidence="2">
    <location>
        <begin position="15"/>
        <end position="24"/>
    </location>
</feature>
<feature type="compositionally biased region" description="Low complexity" evidence="2">
    <location>
        <begin position="40"/>
        <end position="56"/>
    </location>
</feature>
<feature type="compositionally biased region" description="Low complexity" evidence="2">
    <location>
        <begin position="128"/>
        <end position="140"/>
    </location>
</feature>
<feature type="compositionally biased region" description="Low complexity" evidence="2">
    <location>
        <begin position="185"/>
        <end position="202"/>
    </location>
</feature>
<feature type="compositionally biased region" description="Polar residues" evidence="2">
    <location>
        <begin position="203"/>
        <end position="215"/>
    </location>
</feature>
<feature type="compositionally biased region" description="Low complexity" evidence="2">
    <location>
        <begin position="368"/>
        <end position="377"/>
    </location>
</feature>
<feature type="compositionally biased region" description="Pro residues" evidence="2">
    <location>
        <begin position="378"/>
        <end position="399"/>
    </location>
</feature>
<feature type="compositionally biased region" description="Polar residues" evidence="2">
    <location>
        <begin position="436"/>
        <end position="448"/>
    </location>
</feature>
<feature type="compositionally biased region" description="Basic and acidic residues" evidence="2">
    <location>
        <begin position="503"/>
        <end position="515"/>
    </location>
</feature>
<feature type="modified residue" description="Phosphoserine" evidence="4">
    <location>
        <position position="588"/>
    </location>
</feature>
<feature type="splice variant" id="VSP_027704" description="In isoform 2." evidence="3">
    <original>L</original>
    <variation>LA</variation>
    <location>
        <position position="115"/>
    </location>
</feature>
<feature type="splice variant" id="VSP_027705" description="In isoform 2." evidence="3">
    <original>APG</original>
    <variation>GKG</variation>
    <location>
        <begin position="222"/>
        <end position="224"/>
    </location>
</feature>
<feature type="splice variant" id="VSP_027706" description="In isoform 2." evidence="3">
    <location>
        <begin position="225"/>
        <end position="634"/>
    </location>
</feature>
<proteinExistence type="evidence at protein level"/>
<sequence length="634" mass="67263">MFPKVDNPLGHQETRTGATRSQRPQAPKATAASSDELSEESWPSSSWTPSPASTTEGQSTSPPCNLIDNEDSIVAKYINRFRQAQPTSREDRQPAGPTSADFWWLQPTADSSGHLAAGAGEPTGRSAVTGPSPTGVSSTSLASAPLQKVKQSLNSWNSSLLDLETLSLQSRAARLLKRSKASLNDASSSSFPISSDGLSPSSVTFNPDSNKSSNPKEPVLGAPGPSQAIPAPRPASSQATLKPEDDILYQWRQRRKLEQSLQGAGDGTWVLPRMPALTTQTPPVSAVNLGSQDTQPNCTAPCGSVAQPPPSQAFYMERPPLSGPSPHIWAPGTHGVLWAPQANPWVSFGMLPTTLLTSTLAPLASFPVPPTSTSTTPAPTPTPQVCIPGPPTSAPPPCASTPASTLPLPDTPQGPAIPELSSSIQPKKVGPKPRRVSTSSHQKTTVPDTTAFEGPCSQLRGALSQVVTARLFPDSPEDTPPSEADFRKVQAIPSQAKVLRPPPESRRGSKTESRKSQVTLPADAGDPQPATAPKASTLLEVQPREFKMSAPRMGAGDPLTIVPPASSHAPSEDLLSQATKLLQAAEDSDGSEFQEDPVLQLLRAQRAELRQQKRWMPSYLSSWTTLKTRDLRLL</sequence>
<gene>
    <name type="primary">Proser3</name>
</gene>
<accession>Q7TSA6</accession>
<accession>Q8C786</accession>
<reference key="1">
    <citation type="journal article" date="2005" name="Science">
        <title>The transcriptional landscape of the mammalian genome.</title>
        <authorList>
            <person name="Carninci P."/>
            <person name="Kasukawa T."/>
            <person name="Katayama S."/>
            <person name="Gough J."/>
            <person name="Frith M.C."/>
            <person name="Maeda N."/>
            <person name="Oyama R."/>
            <person name="Ravasi T."/>
            <person name="Lenhard B."/>
            <person name="Wells C."/>
            <person name="Kodzius R."/>
            <person name="Shimokawa K."/>
            <person name="Bajic V.B."/>
            <person name="Brenner S.E."/>
            <person name="Batalov S."/>
            <person name="Forrest A.R."/>
            <person name="Zavolan M."/>
            <person name="Davis M.J."/>
            <person name="Wilming L.G."/>
            <person name="Aidinis V."/>
            <person name="Allen J.E."/>
            <person name="Ambesi-Impiombato A."/>
            <person name="Apweiler R."/>
            <person name="Aturaliya R.N."/>
            <person name="Bailey T.L."/>
            <person name="Bansal M."/>
            <person name="Baxter L."/>
            <person name="Beisel K.W."/>
            <person name="Bersano T."/>
            <person name="Bono H."/>
            <person name="Chalk A.M."/>
            <person name="Chiu K.P."/>
            <person name="Choudhary V."/>
            <person name="Christoffels A."/>
            <person name="Clutterbuck D.R."/>
            <person name="Crowe M.L."/>
            <person name="Dalla E."/>
            <person name="Dalrymple B.P."/>
            <person name="de Bono B."/>
            <person name="Della Gatta G."/>
            <person name="di Bernardo D."/>
            <person name="Down T."/>
            <person name="Engstrom P."/>
            <person name="Fagiolini M."/>
            <person name="Faulkner G."/>
            <person name="Fletcher C.F."/>
            <person name="Fukushima T."/>
            <person name="Furuno M."/>
            <person name="Futaki S."/>
            <person name="Gariboldi M."/>
            <person name="Georgii-Hemming P."/>
            <person name="Gingeras T.R."/>
            <person name="Gojobori T."/>
            <person name="Green R.E."/>
            <person name="Gustincich S."/>
            <person name="Harbers M."/>
            <person name="Hayashi Y."/>
            <person name="Hensch T.K."/>
            <person name="Hirokawa N."/>
            <person name="Hill D."/>
            <person name="Huminiecki L."/>
            <person name="Iacono M."/>
            <person name="Ikeo K."/>
            <person name="Iwama A."/>
            <person name="Ishikawa T."/>
            <person name="Jakt M."/>
            <person name="Kanapin A."/>
            <person name="Katoh M."/>
            <person name="Kawasawa Y."/>
            <person name="Kelso J."/>
            <person name="Kitamura H."/>
            <person name="Kitano H."/>
            <person name="Kollias G."/>
            <person name="Krishnan S.P."/>
            <person name="Kruger A."/>
            <person name="Kummerfeld S.K."/>
            <person name="Kurochkin I.V."/>
            <person name="Lareau L.F."/>
            <person name="Lazarevic D."/>
            <person name="Lipovich L."/>
            <person name="Liu J."/>
            <person name="Liuni S."/>
            <person name="McWilliam S."/>
            <person name="Madan Babu M."/>
            <person name="Madera M."/>
            <person name="Marchionni L."/>
            <person name="Matsuda H."/>
            <person name="Matsuzawa S."/>
            <person name="Miki H."/>
            <person name="Mignone F."/>
            <person name="Miyake S."/>
            <person name="Morris K."/>
            <person name="Mottagui-Tabar S."/>
            <person name="Mulder N."/>
            <person name="Nakano N."/>
            <person name="Nakauchi H."/>
            <person name="Ng P."/>
            <person name="Nilsson R."/>
            <person name="Nishiguchi S."/>
            <person name="Nishikawa S."/>
            <person name="Nori F."/>
            <person name="Ohara O."/>
            <person name="Okazaki Y."/>
            <person name="Orlando V."/>
            <person name="Pang K.C."/>
            <person name="Pavan W.J."/>
            <person name="Pavesi G."/>
            <person name="Pesole G."/>
            <person name="Petrovsky N."/>
            <person name="Piazza S."/>
            <person name="Reed J."/>
            <person name="Reid J.F."/>
            <person name="Ring B.Z."/>
            <person name="Ringwald M."/>
            <person name="Rost B."/>
            <person name="Ruan Y."/>
            <person name="Salzberg S.L."/>
            <person name="Sandelin A."/>
            <person name="Schneider C."/>
            <person name="Schoenbach C."/>
            <person name="Sekiguchi K."/>
            <person name="Semple C.A."/>
            <person name="Seno S."/>
            <person name="Sessa L."/>
            <person name="Sheng Y."/>
            <person name="Shibata Y."/>
            <person name="Shimada H."/>
            <person name="Shimada K."/>
            <person name="Silva D."/>
            <person name="Sinclair B."/>
            <person name="Sperling S."/>
            <person name="Stupka E."/>
            <person name="Sugiura K."/>
            <person name="Sultana R."/>
            <person name="Takenaka Y."/>
            <person name="Taki K."/>
            <person name="Tammoja K."/>
            <person name="Tan S.L."/>
            <person name="Tang S."/>
            <person name="Taylor M.S."/>
            <person name="Tegner J."/>
            <person name="Teichmann S.A."/>
            <person name="Ueda H.R."/>
            <person name="van Nimwegen E."/>
            <person name="Verardo R."/>
            <person name="Wei C.L."/>
            <person name="Yagi K."/>
            <person name="Yamanishi H."/>
            <person name="Zabarovsky E."/>
            <person name="Zhu S."/>
            <person name="Zimmer A."/>
            <person name="Hide W."/>
            <person name="Bult C."/>
            <person name="Grimmond S.M."/>
            <person name="Teasdale R.D."/>
            <person name="Liu E.T."/>
            <person name="Brusic V."/>
            <person name="Quackenbush J."/>
            <person name="Wahlestedt C."/>
            <person name="Mattick J.S."/>
            <person name="Hume D.A."/>
            <person name="Kai C."/>
            <person name="Sasaki D."/>
            <person name="Tomaru Y."/>
            <person name="Fukuda S."/>
            <person name="Kanamori-Katayama M."/>
            <person name="Suzuki M."/>
            <person name="Aoki J."/>
            <person name="Arakawa T."/>
            <person name="Iida J."/>
            <person name="Imamura K."/>
            <person name="Itoh M."/>
            <person name="Kato T."/>
            <person name="Kawaji H."/>
            <person name="Kawagashira N."/>
            <person name="Kawashima T."/>
            <person name="Kojima M."/>
            <person name="Kondo S."/>
            <person name="Konno H."/>
            <person name="Nakano K."/>
            <person name="Ninomiya N."/>
            <person name="Nishio T."/>
            <person name="Okada M."/>
            <person name="Plessy C."/>
            <person name="Shibata K."/>
            <person name="Shiraki T."/>
            <person name="Suzuki S."/>
            <person name="Tagami M."/>
            <person name="Waki K."/>
            <person name="Watahiki A."/>
            <person name="Okamura-Oho Y."/>
            <person name="Suzuki H."/>
            <person name="Kawai J."/>
            <person name="Hayashizaki Y."/>
        </authorList>
    </citation>
    <scope>NUCLEOTIDE SEQUENCE [LARGE SCALE MRNA] (ISOFORM 2)</scope>
    <source>
        <strain>C57BL/6J</strain>
        <tissue>Heart</tissue>
    </source>
</reference>
<reference key="2">
    <citation type="journal article" date="2004" name="Genome Res.">
        <title>The status, quality, and expansion of the NIH full-length cDNA project: the Mammalian Gene Collection (MGC).</title>
        <authorList>
            <consortium name="The MGC Project Team"/>
        </authorList>
    </citation>
    <scope>NUCLEOTIDE SEQUENCE [LARGE SCALE MRNA] (ISOFORM 1)</scope>
    <source>
        <tissue>Embryo</tissue>
    </source>
</reference>
<reference key="3">
    <citation type="journal article" date="2010" name="Cell">
        <title>A tissue-specific atlas of mouse protein phosphorylation and expression.</title>
        <authorList>
            <person name="Huttlin E.L."/>
            <person name="Jedrychowski M.P."/>
            <person name="Elias J.E."/>
            <person name="Goswami T."/>
            <person name="Rad R."/>
            <person name="Beausoleil S.A."/>
            <person name="Villen J."/>
            <person name="Haas W."/>
            <person name="Sowa M.E."/>
            <person name="Gygi S.P."/>
        </authorList>
    </citation>
    <scope>PHOSPHORYLATION [LARGE SCALE ANALYSIS] AT SER-588</scope>
    <scope>IDENTIFICATION BY MASS SPECTROMETRY [LARGE SCALE ANALYSIS]</scope>
    <source>
        <tissue>Lung</tissue>
        <tissue>Testis</tissue>
    </source>
</reference>
<organism>
    <name type="scientific">Mus musculus</name>
    <name type="common">Mouse</name>
    <dbReference type="NCBI Taxonomy" id="10090"/>
    <lineage>
        <taxon>Eukaryota</taxon>
        <taxon>Metazoa</taxon>
        <taxon>Chordata</taxon>
        <taxon>Craniata</taxon>
        <taxon>Vertebrata</taxon>
        <taxon>Euteleostomi</taxon>
        <taxon>Mammalia</taxon>
        <taxon>Eutheria</taxon>
        <taxon>Euarchontoglires</taxon>
        <taxon>Glires</taxon>
        <taxon>Rodentia</taxon>
        <taxon>Myomorpha</taxon>
        <taxon>Muroidea</taxon>
        <taxon>Muridae</taxon>
        <taxon>Murinae</taxon>
        <taxon>Mus</taxon>
        <taxon>Mus</taxon>
    </lineage>
</organism>
<name>PRSR3_MOUSE</name>
<comment type="subcellular location">
    <subcellularLocation>
        <location evidence="1">Cytoplasm</location>
        <location evidence="1">Cytoskeleton</location>
        <location evidence="1">Microtubule organizing center</location>
        <location evidence="1">Centrosome</location>
    </subcellularLocation>
</comment>
<comment type="alternative products">
    <event type="alternative splicing"/>
    <isoform>
        <id>Q7TSA6-1</id>
        <name>1</name>
        <sequence type="displayed"/>
    </isoform>
    <isoform>
        <id>Q7TSA6-2</id>
        <name>2</name>
        <sequence type="described" ref="VSP_027704 VSP_027705 VSP_027706"/>
    </isoform>
</comment>